<name>BUR1_GIBZE</name>
<comment type="function">
    <text evidence="1">Serine/threonine-protein kinase involved in transcription regulation. Phosphorylates the UBC2/RAD6 ubiquitin-conjugating enzyme (E2), leading to monoubiquitination of histone H2B and the silencing of telomeric-associated genes. Also required for histone H3 methylation. Necessary for the recovery from pheromone-induced growth arrest in the cell cycle G1 phase (By similarity).</text>
</comment>
<comment type="catalytic activity">
    <reaction>
        <text>L-seryl-[protein] + ATP = O-phospho-L-seryl-[protein] + ADP + H(+)</text>
        <dbReference type="Rhea" id="RHEA:17989"/>
        <dbReference type="Rhea" id="RHEA-COMP:9863"/>
        <dbReference type="Rhea" id="RHEA-COMP:11604"/>
        <dbReference type="ChEBI" id="CHEBI:15378"/>
        <dbReference type="ChEBI" id="CHEBI:29999"/>
        <dbReference type="ChEBI" id="CHEBI:30616"/>
        <dbReference type="ChEBI" id="CHEBI:83421"/>
        <dbReference type="ChEBI" id="CHEBI:456216"/>
        <dbReference type="EC" id="2.7.11.22"/>
    </reaction>
</comment>
<comment type="catalytic activity">
    <reaction>
        <text>L-threonyl-[protein] + ATP = O-phospho-L-threonyl-[protein] + ADP + H(+)</text>
        <dbReference type="Rhea" id="RHEA:46608"/>
        <dbReference type="Rhea" id="RHEA-COMP:11060"/>
        <dbReference type="Rhea" id="RHEA-COMP:11605"/>
        <dbReference type="ChEBI" id="CHEBI:15378"/>
        <dbReference type="ChEBI" id="CHEBI:30013"/>
        <dbReference type="ChEBI" id="CHEBI:30616"/>
        <dbReference type="ChEBI" id="CHEBI:61977"/>
        <dbReference type="ChEBI" id="CHEBI:456216"/>
        <dbReference type="EC" id="2.7.11.22"/>
    </reaction>
</comment>
<comment type="catalytic activity">
    <reaction>
        <text>[DNA-directed RNA polymerase] + ATP = phospho-[DNA-directed RNA polymerase] + ADP + H(+)</text>
        <dbReference type="Rhea" id="RHEA:10216"/>
        <dbReference type="Rhea" id="RHEA-COMP:11321"/>
        <dbReference type="Rhea" id="RHEA-COMP:11322"/>
        <dbReference type="ChEBI" id="CHEBI:15378"/>
        <dbReference type="ChEBI" id="CHEBI:30616"/>
        <dbReference type="ChEBI" id="CHEBI:43176"/>
        <dbReference type="ChEBI" id="CHEBI:68546"/>
        <dbReference type="ChEBI" id="CHEBI:456216"/>
        <dbReference type="EC" id="2.7.11.23"/>
    </reaction>
</comment>
<comment type="subcellular location">
    <subcellularLocation>
        <location evidence="1">Nucleus</location>
    </subcellularLocation>
</comment>
<comment type="similarity">
    <text evidence="5">Belongs to the protein kinase superfamily. CMGC Ser/Thr protein kinase family. CDC2/CDKX subfamily.</text>
</comment>
<comment type="sequence caution" evidence="5">
    <conflict type="erroneous gene model prediction">
        <sequence resource="EMBL-CDS" id="ESU13671"/>
    </conflict>
</comment>
<protein>
    <recommendedName>
        <fullName>Serine/threonine-protein kinase BUR1</fullName>
        <ecNumber>2.7.11.22</ecNumber>
        <ecNumber>2.7.11.23</ecNumber>
    </recommendedName>
</protein>
<gene>
    <name type="primary">BUR1</name>
    <name type="ORF">FGRRES_16828</name>
    <name type="ORF">FGSG_07409</name>
</gene>
<sequence length="539" mass="61614">MEKLSETTPNGTSPRTFALNHSRPRSSFKGCSRISDYELLGKLGEGTFGEVHRARLRKTGALVALKKIIMHHEKDGFPITALREIKLLKLLSHKNILRLEDMAIEHPTRQTDKRKKPIVYMATPYMDHDLSGLLDNPSVQFKEPQIKCYMLQLLEGLRYLHDSRILHRDMKAANLLINNKGILQIADFGLARHYDGRTPESGVPMGEGKRDYTGLVVTRWYRPPELLLQLRQYTPAIDVWGVGCVFGEMLYGKPILAGESDAAQLDIIWDLMGSPNEENMPRWKSLPGADHLTPRPRTGNLETRFRQYGSGAVSLLKELLRLDWRTRINAVDALQHPWFKMQPLPLEPHEIPTYEESHELDRRKFHDRKAALPPAPKGGTVGVGPDANGATAGFNSNEPYGNGRNGVNGGRYRNGPDDRRPAWQRERGAGLPPRPPPNNDDADFRERGPPRARGPPGPRGPDVDTYIPAYNRDDPGRRRDDRPPPPRDDRPPPRDDRRRRNSREDRRFDRDRGTMSRSRSPRHDRSRDRDRPDHNGYRR</sequence>
<feature type="chain" id="PRO_0000085683" description="Serine/threonine-protein kinase BUR1">
    <location>
        <begin position="1"/>
        <end position="539"/>
    </location>
</feature>
<feature type="domain" description="Protein kinase" evidence="2">
    <location>
        <begin position="37"/>
        <end position="339"/>
    </location>
</feature>
<feature type="region of interest" description="Disordered" evidence="4">
    <location>
        <begin position="1"/>
        <end position="27"/>
    </location>
</feature>
<feature type="region of interest" description="Disordered" evidence="4">
    <location>
        <begin position="370"/>
        <end position="539"/>
    </location>
</feature>
<feature type="compositionally biased region" description="Polar residues" evidence="4">
    <location>
        <begin position="1"/>
        <end position="15"/>
    </location>
</feature>
<feature type="compositionally biased region" description="Basic and acidic residues" evidence="4">
    <location>
        <begin position="414"/>
        <end position="428"/>
    </location>
</feature>
<feature type="compositionally biased region" description="Basic and acidic residues" evidence="4">
    <location>
        <begin position="471"/>
        <end position="514"/>
    </location>
</feature>
<feature type="compositionally biased region" description="Basic and acidic residues" evidence="4">
    <location>
        <begin position="521"/>
        <end position="539"/>
    </location>
</feature>
<feature type="active site" description="Proton acceptor" evidence="2 3">
    <location>
        <position position="169"/>
    </location>
</feature>
<feature type="binding site" evidence="2">
    <location>
        <begin position="43"/>
        <end position="51"/>
    </location>
    <ligand>
        <name>ATP</name>
        <dbReference type="ChEBI" id="CHEBI:30616"/>
    </ligand>
</feature>
<feature type="binding site" evidence="2">
    <location>
        <position position="66"/>
    </location>
    <ligand>
        <name>ATP</name>
        <dbReference type="ChEBI" id="CHEBI:30616"/>
    </ligand>
</feature>
<proteinExistence type="inferred from homology"/>
<organism>
    <name type="scientific">Gibberella zeae (strain ATCC MYA-4620 / CBS 123657 / FGSC 9075 / NRRL 31084 / PH-1)</name>
    <name type="common">Wheat head blight fungus</name>
    <name type="synonym">Fusarium graminearum</name>
    <dbReference type="NCBI Taxonomy" id="229533"/>
    <lineage>
        <taxon>Eukaryota</taxon>
        <taxon>Fungi</taxon>
        <taxon>Dikarya</taxon>
        <taxon>Ascomycota</taxon>
        <taxon>Pezizomycotina</taxon>
        <taxon>Sordariomycetes</taxon>
        <taxon>Hypocreomycetidae</taxon>
        <taxon>Hypocreales</taxon>
        <taxon>Nectriaceae</taxon>
        <taxon>Fusarium</taxon>
    </lineage>
</organism>
<evidence type="ECO:0000250" key="1"/>
<evidence type="ECO:0000255" key="2">
    <source>
        <dbReference type="PROSITE-ProRule" id="PRU00159"/>
    </source>
</evidence>
<evidence type="ECO:0000255" key="3">
    <source>
        <dbReference type="PROSITE-ProRule" id="PRU10027"/>
    </source>
</evidence>
<evidence type="ECO:0000256" key="4">
    <source>
        <dbReference type="SAM" id="MobiDB-lite"/>
    </source>
</evidence>
<evidence type="ECO:0000305" key="5"/>
<accession>Q4I5U9</accession>
<accession>A0A0E0SBS4</accession>
<accession>I1RTA8</accession>
<reference key="1">
    <citation type="journal article" date="2007" name="Science">
        <title>The Fusarium graminearum genome reveals a link between localized polymorphism and pathogen specialization.</title>
        <authorList>
            <person name="Cuomo C.A."/>
            <person name="Gueldener U."/>
            <person name="Xu J.-R."/>
            <person name="Trail F."/>
            <person name="Turgeon B.G."/>
            <person name="Di Pietro A."/>
            <person name="Walton J.D."/>
            <person name="Ma L.-J."/>
            <person name="Baker S.E."/>
            <person name="Rep M."/>
            <person name="Adam G."/>
            <person name="Antoniw J."/>
            <person name="Baldwin T."/>
            <person name="Calvo S.E."/>
            <person name="Chang Y.-L."/>
            <person name="DeCaprio D."/>
            <person name="Gale L.R."/>
            <person name="Gnerre S."/>
            <person name="Goswami R.S."/>
            <person name="Hammond-Kosack K."/>
            <person name="Harris L.J."/>
            <person name="Hilburn K."/>
            <person name="Kennell J.C."/>
            <person name="Kroken S."/>
            <person name="Magnuson J.K."/>
            <person name="Mannhaupt G."/>
            <person name="Mauceli E.W."/>
            <person name="Mewes H.-W."/>
            <person name="Mitterbauer R."/>
            <person name="Muehlbauer G."/>
            <person name="Muensterkoetter M."/>
            <person name="Nelson D."/>
            <person name="O'Donnell K."/>
            <person name="Ouellet T."/>
            <person name="Qi W."/>
            <person name="Quesneville H."/>
            <person name="Roncero M.I.G."/>
            <person name="Seong K.-Y."/>
            <person name="Tetko I.V."/>
            <person name="Urban M."/>
            <person name="Waalwijk C."/>
            <person name="Ward T.J."/>
            <person name="Yao J."/>
            <person name="Birren B.W."/>
            <person name="Kistler H.C."/>
        </authorList>
    </citation>
    <scope>NUCLEOTIDE SEQUENCE [LARGE SCALE GENOMIC DNA]</scope>
    <source>
        <strain>ATCC MYA-4620 / CBS 123657 / FGSC 9075 / NRRL 31084 / PH-1</strain>
    </source>
</reference>
<reference key="2">
    <citation type="journal article" date="2010" name="Nature">
        <title>Comparative genomics reveals mobile pathogenicity chromosomes in Fusarium.</title>
        <authorList>
            <person name="Ma L.-J."/>
            <person name="van der Does H.C."/>
            <person name="Borkovich K.A."/>
            <person name="Coleman J.J."/>
            <person name="Daboussi M.-J."/>
            <person name="Di Pietro A."/>
            <person name="Dufresne M."/>
            <person name="Freitag M."/>
            <person name="Grabherr M."/>
            <person name="Henrissat B."/>
            <person name="Houterman P.M."/>
            <person name="Kang S."/>
            <person name="Shim W.-B."/>
            <person name="Woloshuk C."/>
            <person name="Xie X."/>
            <person name="Xu J.-R."/>
            <person name="Antoniw J."/>
            <person name="Baker S.E."/>
            <person name="Bluhm B.H."/>
            <person name="Breakspear A."/>
            <person name="Brown D.W."/>
            <person name="Butchko R.A.E."/>
            <person name="Chapman S."/>
            <person name="Coulson R."/>
            <person name="Coutinho P.M."/>
            <person name="Danchin E.G.J."/>
            <person name="Diener A."/>
            <person name="Gale L.R."/>
            <person name="Gardiner D.M."/>
            <person name="Goff S."/>
            <person name="Hammond-Kosack K.E."/>
            <person name="Hilburn K."/>
            <person name="Hua-Van A."/>
            <person name="Jonkers W."/>
            <person name="Kazan K."/>
            <person name="Kodira C.D."/>
            <person name="Koehrsen M."/>
            <person name="Kumar L."/>
            <person name="Lee Y.-H."/>
            <person name="Li L."/>
            <person name="Manners J.M."/>
            <person name="Miranda-Saavedra D."/>
            <person name="Mukherjee M."/>
            <person name="Park G."/>
            <person name="Park J."/>
            <person name="Park S.-Y."/>
            <person name="Proctor R.H."/>
            <person name="Regev A."/>
            <person name="Ruiz-Roldan M.C."/>
            <person name="Sain D."/>
            <person name="Sakthikumar S."/>
            <person name="Sykes S."/>
            <person name="Schwartz D.C."/>
            <person name="Turgeon B.G."/>
            <person name="Wapinski I."/>
            <person name="Yoder O."/>
            <person name="Young S."/>
            <person name="Zeng Q."/>
            <person name="Zhou S."/>
            <person name="Galagan J."/>
            <person name="Cuomo C.A."/>
            <person name="Kistler H.C."/>
            <person name="Rep M."/>
        </authorList>
    </citation>
    <scope>GENOME REANNOTATION</scope>
    <source>
        <strain>ATCC MYA-4620 / CBS 123657 / FGSC 9075 / NRRL 31084 / PH-1</strain>
    </source>
</reference>
<reference key="3">
    <citation type="journal article" date="2015" name="BMC Genomics">
        <title>The completed genome sequence of the pathogenic ascomycete fungus Fusarium graminearum.</title>
        <authorList>
            <person name="King R."/>
            <person name="Urban M."/>
            <person name="Hammond-Kosack M.C.U."/>
            <person name="Hassani-Pak K."/>
            <person name="Hammond-Kosack K.E."/>
        </authorList>
    </citation>
    <scope>NUCLEOTIDE SEQUENCE [LARGE SCALE GENOMIC DNA]</scope>
    <source>
        <strain>ATCC MYA-4620 / CBS 123657 / FGSC 9075 / NRRL 31084 / PH-1</strain>
    </source>
</reference>
<keyword id="KW-0067">ATP-binding</keyword>
<keyword id="KW-0418">Kinase</keyword>
<keyword id="KW-0547">Nucleotide-binding</keyword>
<keyword id="KW-0539">Nucleus</keyword>
<keyword id="KW-1185">Reference proteome</keyword>
<keyword id="KW-0723">Serine/threonine-protein kinase</keyword>
<keyword id="KW-0808">Transferase</keyword>
<dbReference type="EC" id="2.7.11.22"/>
<dbReference type="EC" id="2.7.11.23"/>
<dbReference type="EMBL" id="DS231666">
    <property type="protein sequence ID" value="ESU13671.1"/>
    <property type="status" value="ALT_SEQ"/>
    <property type="molecule type" value="Genomic_DNA"/>
</dbReference>
<dbReference type="EMBL" id="HG970335">
    <property type="protein sequence ID" value="CEF83887.1"/>
    <property type="molecule type" value="Genomic_DNA"/>
</dbReference>
<dbReference type="RefSeq" id="XP_011327178.1">
    <property type="nucleotide sequence ID" value="XM_011328876.1"/>
</dbReference>
<dbReference type="SMR" id="Q4I5U9"/>
<dbReference type="FunCoup" id="Q4I5U9">
    <property type="interactions" value="212"/>
</dbReference>
<dbReference type="STRING" id="229533.Q4I5U9"/>
<dbReference type="GeneID" id="23554487"/>
<dbReference type="KEGG" id="fgr:FGSG_07409"/>
<dbReference type="VEuPathDB" id="FungiDB:FGRAMPH1_01G24753"/>
<dbReference type="eggNOG" id="KOG0600">
    <property type="taxonomic scope" value="Eukaryota"/>
</dbReference>
<dbReference type="HOGENOM" id="CLU_000288_181_21_1"/>
<dbReference type="InParanoid" id="Q4I5U9"/>
<dbReference type="OrthoDB" id="109753at110618"/>
<dbReference type="PHI-base" id="PHI:1231"/>
<dbReference type="PHI-base" id="PHI:1492"/>
<dbReference type="Proteomes" id="UP000070720">
    <property type="component" value="Chromosome 4"/>
</dbReference>
<dbReference type="GO" id="GO:0005634">
    <property type="term" value="C:nucleus"/>
    <property type="evidence" value="ECO:0007669"/>
    <property type="project" value="UniProtKB-SubCell"/>
</dbReference>
<dbReference type="GO" id="GO:0005524">
    <property type="term" value="F:ATP binding"/>
    <property type="evidence" value="ECO:0007669"/>
    <property type="project" value="UniProtKB-KW"/>
</dbReference>
<dbReference type="GO" id="GO:0004693">
    <property type="term" value="F:cyclin-dependent protein serine/threonine kinase activity"/>
    <property type="evidence" value="ECO:0007669"/>
    <property type="project" value="UniProtKB-EC"/>
</dbReference>
<dbReference type="GO" id="GO:0106310">
    <property type="term" value="F:protein serine kinase activity"/>
    <property type="evidence" value="ECO:0007669"/>
    <property type="project" value="RHEA"/>
</dbReference>
<dbReference type="GO" id="GO:0008353">
    <property type="term" value="F:RNA polymerase II CTD heptapeptide repeat kinase activity"/>
    <property type="evidence" value="ECO:0007669"/>
    <property type="project" value="UniProtKB-EC"/>
</dbReference>
<dbReference type="CDD" id="cd07866">
    <property type="entry name" value="STKc_BUR1"/>
    <property type="match status" value="1"/>
</dbReference>
<dbReference type="FunFam" id="3.30.200.20:FF:000514">
    <property type="entry name" value="Serine/threonine-protein kinase BUR1"/>
    <property type="match status" value="1"/>
</dbReference>
<dbReference type="FunFam" id="1.10.510.10:FF:000562">
    <property type="entry name" value="Serine/threonine-protein kinase bur1"/>
    <property type="match status" value="1"/>
</dbReference>
<dbReference type="Gene3D" id="3.30.200.20">
    <property type="entry name" value="Phosphorylase Kinase, domain 1"/>
    <property type="match status" value="1"/>
</dbReference>
<dbReference type="Gene3D" id="1.10.510.10">
    <property type="entry name" value="Transferase(Phosphotransferase) domain 1"/>
    <property type="match status" value="1"/>
</dbReference>
<dbReference type="InterPro" id="IPR050108">
    <property type="entry name" value="CDK"/>
</dbReference>
<dbReference type="InterPro" id="IPR011009">
    <property type="entry name" value="Kinase-like_dom_sf"/>
</dbReference>
<dbReference type="InterPro" id="IPR000719">
    <property type="entry name" value="Prot_kinase_dom"/>
</dbReference>
<dbReference type="InterPro" id="IPR017441">
    <property type="entry name" value="Protein_kinase_ATP_BS"/>
</dbReference>
<dbReference type="InterPro" id="IPR008271">
    <property type="entry name" value="Ser/Thr_kinase_AS"/>
</dbReference>
<dbReference type="PANTHER" id="PTHR24056">
    <property type="entry name" value="CELL DIVISION PROTEIN KINASE"/>
    <property type="match status" value="1"/>
</dbReference>
<dbReference type="PANTHER" id="PTHR24056:SF233">
    <property type="entry name" value="CYCLIN-DEPENDENT KINASE 9"/>
    <property type="match status" value="1"/>
</dbReference>
<dbReference type="Pfam" id="PF00069">
    <property type="entry name" value="Pkinase"/>
    <property type="match status" value="1"/>
</dbReference>
<dbReference type="SMART" id="SM00220">
    <property type="entry name" value="S_TKc"/>
    <property type="match status" value="1"/>
</dbReference>
<dbReference type="SUPFAM" id="SSF56112">
    <property type="entry name" value="Protein kinase-like (PK-like)"/>
    <property type="match status" value="1"/>
</dbReference>
<dbReference type="PROSITE" id="PS00107">
    <property type="entry name" value="PROTEIN_KINASE_ATP"/>
    <property type="match status" value="1"/>
</dbReference>
<dbReference type="PROSITE" id="PS50011">
    <property type="entry name" value="PROTEIN_KINASE_DOM"/>
    <property type="match status" value="1"/>
</dbReference>
<dbReference type="PROSITE" id="PS00108">
    <property type="entry name" value="PROTEIN_KINASE_ST"/>
    <property type="match status" value="1"/>
</dbReference>